<organism>
    <name type="scientific">Campylobacter jejuni subsp. jejuni serotype O:2 (strain ATCC 700819 / NCTC 11168)</name>
    <dbReference type="NCBI Taxonomy" id="192222"/>
    <lineage>
        <taxon>Bacteria</taxon>
        <taxon>Pseudomonadati</taxon>
        <taxon>Campylobacterota</taxon>
        <taxon>Epsilonproteobacteria</taxon>
        <taxon>Campylobacterales</taxon>
        <taxon>Campylobacteraceae</taxon>
        <taxon>Campylobacter</taxon>
    </lineage>
</organism>
<keyword id="KW-0963">Cytoplasm</keyword>
<keyword id="KW-0210">Decarboxylase</keyword>
<keyword id="KW-0456">Lyase</keyword>
<keyword id="KW-0627">Porphyrin biosynthesis</keyword>
<keyword id="KW-1185">Reference proteome</keyword>
<reference key="1">
    <citation type="journal article" date="2000" name="Nature">
        <title>The genome sequence of the food-borne pathogen Campylobacter jejuni reveals hypervariable sequences.</title>
        <authorList>
            <person name="Parkhill J."/>
            <person name="Wren B.W."/>
            <person name="Mungall K.L."/>
            <person name="Ketley J.M."/>
            <person name="Churcher C.M."/>
            <person name="Basham D."/>
            <person name="Chillingworth T."/>
            <person name="Davies R.M."/>
            <person name="Feltwell T."/>
            <person name="Holroyd S."/>
            <person name="Jagels K."/>
            <person name="Karlyshev A.V."/>
            <person name="Moule S."/>
            <person name="Pallen M.J."/>
            <person name="Penn C.W."/>
            <person name="Quail M.A."/>
            <person name="Rajandream M.A."/>
            <person name="Rutherford K.M."/>
            <person name="van Vliet A.H.M."/>
            <person name="Whitehead S."/>
            <person name="Barrell B.G."/>
        </authorList>
    </citation>
    <scope>NUCLEOTIDE SEQUENCE [LARGE SCALE GENOMIC DNA]</scope>
    <source>
        <strain>ATCC 700819 / NCTC 11168</strain>
    </source>
</reference>
<feature type="chain" id="PRO_0000187591" description="Uroporphyrinogen decarboxylase">
    <location>
        <begin position="1"/>
        <end position="340"/>
    </location>
</feature>
<feature type="binding site" evidence="1">
    <location>
        <begin position="21"/>
        <end position="25"/>
    </location>
    <ligand>
        <name>substrate</name>
    </ligand>
</feature>
<feature type="binding site" evidence="1">
    <location>
        <position position="40"/>
    </location>
    <ligand>
        <name>substrate</name>
    </ligand>
</feature>
<feature type="binding site" evidence="1">
    <location>
        <position position="71"/>
    </location>
    <ligand>
        <name>substrate</name>
    </ligand>
</feature>
<feature type="binding site" evidence="1">
    <location>
        <position position="148"/>
    </location>
    <ligand>
        <name>substrate</name>
    </ligand>
</feature>
<feature type="binding site" evidence="1">
    <location>
        <position position="203"/>
    </location>
    <ligand>
        <name>substrate</name>
    </ligand>
</feature>
<feature type="binding site" evidence="1">
    <location>
        <position position="316"/>
    </location>
    <ligand>
        <name>substrate</name>
    </ligand>
</feature>
<feature type="site" description="Transition state stabilizer" evidence="1">
    <location>
        <position position="71"/>
    </location>
</feature>
<proteinExistence type="inferred from homology"/>
<protein>
    <recommendedName>
        <fullName evidence="1">Uroporphyrinogen decarboxylase</fullName>
        <shortName evidence="1">UPD</shortName>
        <shortName evidence="1">URO-D</shortName>
        <ecNumber evidence="1">4.1.1.37</ecNumber>
    </recommendedName>
</protein>
<evidence type="ECO:0000255" key="1">
    <source>
        <dbReference type="HAMAP-Rule" id="MF_00218"/>
    </source>
</evidence>
<name>DCUP_CAMJE</name>
<comment type="function">
    <text evidence="1">Catalyzes the decarboxylation of four acetate groups of uroporphyrinogen-III to yield coproporphyrinogen-III.</text>
</comment>
<comment type="catalytic activity">
    <reaction evidence="1">
        <text>uroporphyrinogen III + 4 H(+) = coproporphyrinogen III + 4 CO2</text>
        <dbReference type="Rhea" id="RHEA:19865"/>
        <dbReference type="ChEBI" id="CHEBI:15378"/>
        <dbReference type="ChEBI" id="CHEBI:16526"/>
        <dbReference type="ChEBI" id="CHEBI:57308"/>
        <dbReference type="ChEBI" id="CHEBI:57309"/>
        <dbReference type="EC" id="4.1.1.37"/>
    </reaction>
</comment>
<comment type="pathway">
    <text evidence="1">Porphyrin-containing compound metabolism; protoporphyrin-IX biosynthesis; coproporphyrinogen-III from 5-aminolevulinate: step 4/4.</text>
</comment>
<comment type="subunit">
    <text evidence="1">Homodimer.</text>
</comment>
<comment type="subcellular location">
    <subcellularLocation>
        <location evidence="1">Cytoplasm</location>
    </subcellularLocation>
</comment>
<comment type="similarity">
    <text evidence="1">Belongs to the uroporphyrinogen decarboxylase family.</text>
</comment>
<dbReference type="EC" id="4.1.1.37" evidence="1"/>
<dbReference type="EMBL" id="AL111168">
    <property type="protein sequence ID" value="CAL35358.1"/>
    <property type="molecule type" value="Genomic_DNA"/>
</dbReference>
<dbReference type="PIR" id="E81331">
    <property type="entry name" value="E81331"/>
</dbReference>
<dbReference type="RefSeq" id="WP_002853233.1">
    <property type="nucleotide sequence ID" value="NZ_SZUC01000001.1"/>
</dbReference>
<dbReference type="RefSeq" id="YP_002344634.1">
    <property type="nucleotide sequence ID" value="NC_002163.1"/>
</dbReference>
<dbReference type="SMR" id="Q9PN54"/>
<dbReference type="IntAct" id="Q9PN54">
    <property type="interactions" value="7"/>
</dbReference>
<dbReference type="STRING" id="192222.Cj1243"/>
<dbReference type="PaxDb" id="192222-Cj1243"/>
<dbReference type="EnsemblBacteria" id="CAL35358">
    <property type="protein sequence ID" value="CAL35358"/>
    <property type="gene ID" value="Cj1243"/>
</dbReference>
<dbReference type="GeneID" id="905534"/>
<dbReference type="KEGG" id="cje:Cj1243"/>
<dbReference type="PATRIC" id="fig|192222.6.peg.1225"/>
<dbReference type="eggNOG" id="COG0407">
    <property type="taxonomic scope" value="Bacteria"/>
</dbReference>
<dbReference type="HOGENOM" id="CLU_040933_0_0_7"/>
<dbReference type="OrthoDB" id="9806656at2"/>
<dbReference type="UniPathway" id="UPA00251">
    <property type="reaction ID" value="UER00321"/>
</dbReference>
<dbReference type="Proteomes" id="UP000000799">
    <property type="component" value="Chromosome"/>
</dbReference>
<dbReference type="GO" id="GO:0005829">
    <property type="term" value="C:cytosol"/>
    <property type="evidence" value="ECO:0007669"/>
    <property type="project" value="TreeGrafter"/>
</dbReference>
<dbReference type="GO" id="GO:0004853">
    <property type="term" value="F:uroporphyrinogen decarboxylase activity"/>
    <property type="evidence" value="ECO:0007669"/>
    <property type="project" value="UniProtKB-UniRule"/>
</dbReference>
<dbReference type="GO" id="GO:0019353">
    <property type="term" value="P:protoporphyrinogen IX biosynthetic process from glutamate"/>
    <property type="evidence" value="ECO:0007669"/>
    <property type="project" value="TreeGrafter"/>
</dbReference>
<dbReference type="CDD" id="cd00717">
    <property type="entry name" value="URO-D"/>
    <property type="match status" value="1"/>
</dbReference>
<dbReference type="FunFam" id="3.20.20.210:FF:000007">
    <property type="entry name" value="Uroporphyrinogen decarboxylase"/>
    <property type="match status" value="1"/>
</dbReference>
<dbReference type="Gene3D" id="3.20.20.210">
    <property type="match status" value="1"/>
</dbReference>
<dbReference type="HAMAP" id="MF_00218">
    <property type="entry name" value="URO_D"/>
    <property type="match status" value="1"/>
</dbReference>
<dbReference type="InterPro" id="IPR038071">
    <property type="entry name" value="UROD/MetE-like_sf"/>
</dbReference>
<dbReference type="InterPro" id="IPR006361">
    <property type="entry name" value="Uroporphyrinogen_deCO2ase_HemE"/>
</dbReference>
<dbReference type="InterPro" id="IPR000257">
    <property type="entry name" value="Uroporphyrinogen_deCOase"/>
</dbReference>
<dbReference type="NCBIfam" id="TIGR01464">
    <property type="entry name" value="hemE"/>
    <property type="match status" value="1"/>
</dbReference>
<dbReference type="PANTHER" id="PTHR21091">
    <property type="entry name" value="METHYLTETRAHYDROFOLATE:HOMOCYSTEINE METHYLTRANSFERASE RELATED"/>
    <property type="match status" value="1"/>
</dbReference>
<dbReference type="PANTHER" id="PTHR21091:SF169">
    <property type="entry name" value="UROPORPHYRINOGEN DECARBOXYLASE"/>
    <property type="match status" value="1"/>
</dbReference>
<dbReference type="Pfam" id="PF01208">
    <property type="entry name" value="URO-D"/>
    <property type="match status" value="1"/>
</dbReference>
<dbReference type="SUPFAM" id="SSF51726">
    <property type="entry name" value="UROD/MetE-like"/>
    <property type="match status" value="1"/>
</dbReference>
<dbReference type="PROSITE" id="PS00906">
    <property type="entry name" value="UROD_1"/>
    <property type="match status" value="1"/>
</dbReference>
<dbReference type="PROSITE" id="PS00907">
    <property type="entry name" value="UROD_2"/>
    <property type="match status" value="1"/>
</dbReference>
<sequence>MIFIDACFKKPTPYTPIWMMRQAGRYLPEYMEVRKQAGDFLSLCKDYKKASEVSLQPIDILDVDAAIIFSDILVVPLEMGMNLRFEKGEGPVFGNPISTLEDLEKLDDQNAHKKLNYVYDALKLTREKLSQNKALIGFCGSPWTIATYMIEGSGSKNYAKCKKMLYQNPELLHKILNKLTQVLKLYLEEQIKAGANAIQIFDSWASALEYDKFFEFSFNYMLEISNFIKSKYPNIPVILFPKGISGYLDRIDGNFDVFGVDWSTPLDLARDKLSHKYTLQGNMEPCRLYDKNAIKEGVEKILKTMQNKAHIFNLGHGILPDIPVENAKYFIKLVQESSAK</sequence>
<accession>Q9PN54</accession>
<accession>Q0P913</accession>
<gene>
    <name evidence="1" type="primary">hemE</name>
    <name type="ordered locus">Cj1243</name>
</gene>